<accession>A3MZW8</accession>
<name>Y602_ACTP2</name>
<comment type="similarity">
    <text evidence="1">Belongs to the UPF0246 family.</text>
</comment>
<reference key="1">
    <citation type="journal article" date="2008" name="J. Bacteriol.">
        <title>The complete genome sequence of Actinobacillus pleuropneumoniae L20 (serotype 5b).</title>
        <authorList>
            <person name="Foote S.J."/>
            <person name="Bosse J.T."/>
            <person name="Bouevitch A.B."/>
            <person name="Langford P.R."/>
            <person name="Young N.M."/>
            <person name="Nash J.H.E."/>
        </authorList>
    </citation>
    <scope>NUCLEOTIDE SEQUENCE [LARGE SCALE GENOMIC DNA]</scope>
    <source>
        <strain>L20</strain>
    </source>
</reference>
<sequence>MLAIISPAKTLDFETPAPNFPFANSQPKLTAYSQQLIDICKQFSPAELGSLMSISDKLASLNVARFAEWQLEHNEQNSKAALFAFKGDVYTGLDAETLTQAQVEYARVHLRMLSGLYGLLKPLDLMQPYRLEMGTKLVNPKGKDLYAFWGDIITQHLQTAMDEQGDNILVNLASDEYYGAVKPQKLQATIIKPVFLDEKNGKFKQISFYAKKARGMMVRFILETQPTSVEQLKAFNYGSYWFDEDASGATELVFKREEQA</sequence>
<dbReference type="EMBL" id="CP000569">
    <property type="protein sequence ID" value="ABN73704.1"/>
    <property type="molecule type" value="Genomic_DNA"/>
</dbReference>
<dbReference type="RefSeq" id="WP_009875385.1">
    <property type="nucleotide sequence ID" value="NC_009053.1"/>
</dbReference>
<dbReference type="SMR" id="A3MZW8"/>
<dbReference type="STRING" id="416269.APL_0602"/>
<dbReference type="EnsemblBacteria" id="ABN73704">
    <property type="protein sequence ID" value="ABN73704"/>
    <property type="gene ID" value="APL_0602"/>
</dbReference>
<dbReference type="KEGG" id="apl:APL_0602"/>
<dbReference type="PATRIC" id="fig|416269.6.peg.633"/>
<dbReference type="eggNOG" id="COG3022">
    <property type="taxonomic scope" value="Bacteria"/>
</dbReference>
<dbReference type="HOGENOM" id="CLU_061989_0_0_6"/>
<dbReference type="Proteomes" id="UP000001432">
    <property type="component" value="Chromosome"/>
</dbReference>
<dbReference type="GO" id="GO:0005829">
    <property type="term" value="C:cytosol"/>
    <property type="evidence" value="ECO:0007669"/>
    <property type="project" value="TreeGrafter"/>
</dbReference>
<dbReference type="GO" id="GO:0033194">
    <property type="term" value="P:response to hydroperoxide"/>
    <property type="evidence" value="ECO:0007669"/>
    <property type="project" value="TreeGrafter"/>
</dbReference>
<dbReference type="HAMAP" id="MF_00652">
    <property type="entry name" value="UPF0246"/>
    <property type="match status" value="1"/>
</dbReference>
<dbReference type="InterPro" id="IPR005583">
    <property type="entry name" value="YaaA"/>
</dbReference>
<dbReference type="NCBIfam" id="NF002541">
    <property type="entry name" value="PRK02101.1-1"/>
    <property type="match status" value="1"/>
</dbReference>
<dbReference type="NCBIfam" id="NF002542">
    <property type="entry name" value="PRK02101.1-3"/>
    <property type="match status" value="1"/>
</dbReference>
<dbReference type="PANTHER" id="PTHR30283:SF4">
    <property type="entry name" value="PEROXIDE STRESS RESISTANCE PROTEIN YAAA"/>
    <property type="match status" value="1"/>
</dbReference>
<dbReference type="PANTHER" id="PTHR30283">
    <property type="entry name" value="PEROXIDE STRESS RESPONSE PROTEIN YAAA"/>
    <property type="match status" value="1"/>
</dbReference>
<dbReference type="Pfam" id="PF03883">
    <property type="entry name" value="H2O2_YaaD"/>
    <property type="match status" value="1"/>
</dbReference>
<evidence type="ECO:0000255" key="1">
    <source>
        <dbReference type="HAMAP-Rule" id="MF_00652"/>
    </source>
</evidence>
<keyword id="KW-1185">Reference proteome</keyword>
<feature type="chain" id="PRO_1000061582" description="UPF0246 protein APL_0602">
    <location>
        <begin position="1"/>
        <end position="260"/>
    </location>
</feature>
<protein>
    <recommendedName>
        <fullName evidence="1">UPF0246 protein APL_0602</fullName>
    </recommendedName>
</protein>
<organism>
    <name type="scientific">Actinobacillus pleuropneumoniae serotype 5b (strain L20)</name>
    <dbReference type="NCBI Taxonomy" id="416269"/>
    <lineage>
        <taxon>Bacteria</taxon>
        <taxon>Pseudomonadati</taxon>
        <taxon>Pseudomonadota</taxon>
        <taxon>Gammaproteobacteria</taxon>
        <taxon>Pasteurellales</taxon>
        <taxon>Pasteurellaceae</taxon>
        <taxon>Actinobacillus</taxon>
    </lineage>
</organism>
<proteinExistence type="inferred from homology"/>
<gene>
    <name type="ordered locus">APL_0602</name>
</gene>